<comment type="function">
    <text evidence="1">Specifically dimethylates two adjacent adenosines (A1518 and A1519) in the loop of a conserved hairpin near the 3'-end of 16S rRNA in the 30S particle. May play a critical role in biogenesis of 30S subunits.</text>
</comment>
<comment type="catalytic activity">
    <reaction evidence="1">
        <text>adenosine(1518)/adenosine(1519) in 16S rRNA + 4 S-adenosyl-L-methionine = N(6)-dimethyladenosine(1518)/N(6)-dimethyladenosine(1519) in 16S rRNA + 4 S-adenosyl-L-homocysteine + 4 H(+)</text>
        <dbReference type="Rhea" id="RHEA:19609"/>
        <dbReference type="Rhea" id="RHEA-COMP:10232"/>
        <dbReference type="Rhea" id="RHEA-COMP:10233"/>
        <dbReference type="ChEBI" id="CHEBI:15378"/>
        <dbReference type="ChEBI" id="CHEBI:57856"/>
        <dbReference type="ChEBI" id="CHEBI:59789"/>
        <dbReference type="ChEBI" id="CHEBI:74411"/>
        <dbReference type="ChEBI" id="CHEBI:74493"/>
        <dbReference type="EC" id="2.1.1.182"/>
    </reaction>
</comment>
<comment type="subcellular location">
    <subcellularLocation>
        <location evidence="1">Cytoplasm</location>
    </subcellularLocation>
</comment>
<comment type="similarity">
    <text evidence="1">Belongs to the class I-like SAM-binding methyltransferase superfamily. rRNA adenine N(6)-methyltransferase family. RsmA subfamily.</text>
</comment>
<feature type="chain" id="PRO_0000257320" description="Ribosomal RNA small subunit methyltransferase A">
    <location>
        <begin position="1"/>
        <end position="291"/>
    </location>
</feature>
<feature type="binding site" evidence="1">
    <location>
        <position position="21"/>
    </location>
    <ligand>
        <name>S-adenosyl-L-methionine</name>
        <dbReference type="ChEBI" id="CHEBI:59789"/>
    </ligand>
</feature>
<feature type="binding site" evidence="1">
    <location>
        <position position="23"/>
    </location>
    <ligand>
        <name>S-adenosyl-L-methionine</name>
        <dbReference type="ChEBI" id="CHEBI:59789"/>
    </ligand>
</feature>
<feature type="binding site" evidence="1">
    <location>
        <position position="48"/>
    </location>
    <ligand>
        <name>S-adenosyl-L-methionine</name>
        <dbReference type="ChEBI" id="CHEBI:59789"/>
    </ligand>
</feature>
<feature type="binding site" evidence="1">
    <location>
        <position position="70"/>
    </location>
    <ligand>
        <name>S-adenosyl-L-methionine</name>
        <dbReference type="ChEBI" id="CHEBI:59789"/>
    </ligand>
</feature>
<feature type="binding site" evidence="1">
    <location>
        <position position="95"/>
    </location>
    <ligand>
        <name>S-adenosyl-L-methionine</name>
        <dbReference type="ChEBI" id="CHEBI:59789"/>
    </ligand>
</feature>
<feature type="binding site" evidence="1">
    <location>
        <position position="115"/>
    </location>
    <ligand>
        <name>S-adenosyl-L-methionine</name>
        <dbReference type="ChEBI" id="CHEBI:59789"/>
    </ligand>
</feature>
<protein>
    <recommendedName>
        <fullName evidence="1">Ribosomal RNA small subunit methyltransferase A</fullName>
        <ecNumber evidence="1">2.1.1.182</ecNumber>
    </recommendedName>
    <alternativeName>
        <fullName evidence="1">16S rRNA (adenine(1518)-N(6)/adenine(1519)-N(6))-dimethyltransferase</fullName>
    </alternativeName>
    <alternativeName>
        <fullName evidence="1">16S rRNA dimethyladenosine transferase</fullName>
    </alternativeName>
    <alternativeName>
        <fullName evidence="1">16S rRNA dimethylase</fullName>
    </alternativeName>
    <alternativeName>
        <fullName evidence="1">S-adenosylmethionine-6-N', N'-adenosyl(rRNA) dimethyltransferase</fullName>
    </alternativeName>
</protein>
<proteinExistence type="inferred from homology"/>
<keyword id="KW-0963">Cytoplasm</keyword>
<keyword id="KW-0489">Methyltransferase</keyword>
<keyword id="KW-1185">Reference proteome</keyword>
<keyword id="KW-0694">RNA-binding</keyword>
<keyword id="KW-0698">rRNA processing</keyword>
<keyword id="KW-0949">S-adenosyl-L-methionine</keyword>
<keyword id="KW-0808">Transferase</keyword>
<sequence length="291" mass="32575">MGGDNTLNDFRHIPRKRFGQHWLKDQGVLDQIVKAAELNPEDCVLEVGPGKGALTEKLIESQARFIQAIELDRDLVVGLKKRFSHQNKFSLREGDILSAPLDAENGLTINKVVANIPYNITGPLLKRLIGELRKAPDNCFETLVLLMQKEVAQRLLARPGTSNFSALSVRIQLLAKCQDVCDVPSKCFQPAPKVDSKVVMIKPFASIDPDFYEVGNLLEKLLKHAFAGRRKKLRNTIGSFVTSNDQIKEFFAYRGISLDQRPQEISPSNWFGLAKALKETCVIENGTFQSK</sequence>
<accession>Q46L58</accession>
<evidence type="ECO:0000255" key="1">
    <source>
        <dbReference type="HAMAP-Rule" id="MF_00607"/>
    </source>
</evidence>
<dbReference type="EC" id="2.1.1.182" evidence="1"/>
<dbReference type="EMBL" id="CP000095">
    <property type="protein sequence ID" value="AAZ57770.1"/>
    <property type="molecule type" value="Genomic_DNA"/>
</dbReference>
<dbReference type="RefSeq" id="WP_011293812.1">
    <property type="nucleotide sequence ID" value="NC_007335.2"/>
</dbReference>
<dbReference type="SMR" id="Q46L58"/>
<dbReference type="STRING" id="59920.PMN2A_0278"/>
<dbReference type="KEGG" id="pmn:PMN2A_0278"/>
<dbReference type="HOGENOM" id="CLU_041220_0_1_3"/>
<dbReference type="OrthoDB" id="9814755at2"/>
<dbReference type="PhylomeDB" id="Q46L58"/>
<dbReference type="Proteomes" id="UP000002535">
    <property type="component" value="Chromosome"/>
</dbReference>
<dbReference type="GO" id="GO:0005829">
    <property type="term" value="C:cytosol"/>
    <property type="evidence" value="ECO:0007669"/>
    <property type="project" value="TreeGrafter"/>
</dbReference>
<dbReference type="GO" id="GO:0052908">
    <property type="term" value="F:16S rRNA (adenine(1518)-N(6)/adenine(1519)-N(6))-dimethyltransferase activity"/>
    <property type="evidence" value="ECO:0007669"/>
    <property type="project" value="UniProtKB-EC"/>
</dbReference>
<dbReference type="GO" id="GO:0003723">
    <property type="term" value="F:RNA binding"/>
    <property type="evidence" value="ECO:0007669"/>
    <property type="project" value="UniProtKB-KW"/>
</dbReference>
<dbReference type="CDD" id="cd02440">
    <property type="entry name" value="AdoMet_MTases"/>
    <property type="match status" value="1"/>
</dbReference>
<dbReference type="Gene3D" id="1.10.8.100">
    <property type="entry name" value="Ribosomal RNA adenine dimethylase-like, domain 2"/>
    <property type="match status" value="1"/>
</dbReference>
<dbReference type="Gene3D" id="3.40.50.150">
    <property type="entry name" value="Vaccinia Virus protein VP39"/>
    <property type="match status" value="1"/>
</dbReference>
<dbReference type="HAMAP" id="MF_00607">
    <property type="entry name" value="16SrRNA_methyltr_A"/>
    <property type="match status" value="1"/>
</dbReference>
<dbReference type="InterPro" id="IPR001737">
    <property type="entry name" value="KsgA/Erm"/>
</dbReference>
<dbReference type="InterPro" id="IPR023165">
    <property type="entry name" value="rRNA_Ade_diMease-like_C"/>
</dbReference>
<dbReference type="InterPro" id="IPR020596">
    <property type="entry name" value="rRNA_Ade_Mease_Trfase_CS"/>
</dbReference>
<dbReference type="InterPro" id="IPR020598">
    <property type="entry name" value="rRNA_Ade_methylase_Trfase_N"/>
</dbReference>
<dbReference type="InterPro" id="IPR011530">
    <property type="entry name" value="rRNA_adenine_dimethylase"/>
</dbReference>
<dbReference type="InterPro" id="IPR029063">
    <property type="entry name" value="SAM-dependent_MTases_sf"/>
</dbReference>
<dbReference type="NCBIfam" id="TIGR00755">
    <property type="entry name" value="ksgA"/>
    <property type="match status" value="1"/>
</dbReference>
<dbReference type="PANTHER" id="PTHR11727">
    <property type="entry name" value="DIMETHYLADENOSINE TRANSFERASE"/>
    <property type="match status" value="1"/>
</dbReference>
<dbReference type="PANTHER" id="PTHR11727:SF7">
    <property type="entry name" value="DIMETHYLADENOSINE TRANSFERASE-RELATED"/>
    <property type="match status" value="1"/>
</dbReference>
<dbReference type="Pfam" id="PF00398">
    <property type="entry name" value="RrnaAD"/>
    <property type="match status" value="1"/>
</dbReference>
<dbReference type="SMART" id="SM00650">
    <property type="entry name" value="rADc"/>
    <property type="match status" value="1"/>
</dbReference>
<dbReference type="SUPFAM" id="SSF53335">
    <property type="entry name" value="S-adenosyl-L-methionine-dependent methyltransferases"/>
    <property type="match status" value="1"/>
</dbReference>
<dbReference type="PROSITE" id="PS01131">
    <property type="entry name" value="RRNA_A_DIMETH"/>
    <property type="match status" value="1"/>
</dbReference>
<dbReference type="PROSITE" id="PS51689">
    <property type="entry name" value="SAM_RNA_A_N6_MT"/>
    <property type="match status" value="1"/>
</dbReference>
<name>RSMA_PROMT</name>
<reference key="1">
    <citation type="journal article" date="2007" name="PLoS Genet.">
        <title>Patterns and implications of gene gain and loss in the evolution of Prochlorococcus.</title>
        <authorList>
            <person name="Kettler G.C."/>
            <person name="Martiny A.C."/>
            <person name="Huang K."/>
            <person name="Zucker J."/>
            <person name="Coleman M.L."/>
            <person name="Rodrigue S."/>
            <person name="Chen F."/>
            <person name="Lapidus A."/>
            <person name="Ferriera S."/>
            <person name="Johnson J."/>
            <person name="Steglich C."/>
            <person name="Church G.M."/>
            <person name="Richardson P."/>
            <person name="Chisholm S.W."/>
        </authorList>
    </citation>
    <scope>NUCLEOTIDE SEQUENCE [LARGE SCALE GENOMIC DNA]</scope>
    <source>
        <strain>NATL2A</strain>
    </source>
</reference>
<organism>
    <name type="scientific">Prochlorococcus marinus (strain NATL2A)</name>
    <dbReference type="NCBI Taxonomy" id="59920"/>
    <lineage>
        <taxon>Bacteria</taxon>
        <taxon>Bacillati</taxon>
        <taxon>Cyanobacteriota</taxon>
        <taxon>Cyanophyceae</taxon>
        <taxon>Synechococcales</taxon>
        <taxon>Prochlorococcaceae</taxon>
        <taxon>Prochlorococcus</taxon>
    </lineage>
</organism>
<gene>
    <name evidence="1" type="primary">rsmA</name>
    <name evidence="1" type="synonym">ksgA</name>
    <name type="ordered locus">PMN2A_0278</name>
</gene>